<protein>
    <recommendedName>
        <fullName>Probable Xaa-Pro aminopeptidase PEPP</fullName>
        <ecNumber>3.4.11.9</ecNumber>
    </recommendedName>
    <alternativeName>
        <fullName>Aminoacylproline aminopeptidase</fullName>
    </alternativeName>
    <alternativeName>
        <fullName>Prolidase</fullName>
    </alternativeName>
</protein>
<reference key="1">
    <citation type="journal article" date="2011" name="PLoS Genet.">
        <title>Comparative genomic analysis of human fungal pathogens causing paracoccidioidomycosis.</title>
        <authorList>
            <person name="Desjardins C.A."/>
            <person name="Champion M.D."/>
            <person name="Holder J.W."/>
            <person name="Muszewska A."/>
            <person name="Goldberg J."/>
            <person name="Bailao A.M."/>
            <person name="Brigido M.M."/>
            <person name="Ferreira M.E."/>
            <person name="Garcia A.M."/>
            <person name="Grynberg M."/>
            <person name="Gujja S."/>
            <person name="Heiman D.I."/>
            <person name="Henn M.R."/>
            <person name="Kodira C.D."/>
            <person name="Leon-Narvaez H."/>
            <person name="Longo L.V.G."/>
            <person name="Ma L.-J."/>
            <person name="Malavazi I."/>
            <person name="Matsuo A.L."/>
            <person name="Morais F.V."/>
            <person name="Pereira M."/>
            <person name="Rodriguez-Brito S."/>
            <person name="Sakthikumar S."/>
            <person name="Salem-Izacc S.M."/>
            <person name="Sykes S.M."/>
            <person name="Teixeira M.M."/>
            <person name="Vallejo M.C."/>
            <person name="Walter M.E."/>
            <person name="Yandava C."/>
            <person name="Young S."/>
            <person name="Zeng Q."/>
            <person name="Zucker J."/>
            <person name="Felipe M.S."/>
            <person name="Goldman G.H."/>
            <person name="Haas B.J."/>
            <person name="McEwen J.G."/>
            <person name="Nino-Vega G."/>
            <person name="Puccia R."/>
            <person name="San-Blas G."/>
            <person name="Soares C.M."/>
            <person name="Birren B.W."/>
            <person name="Cuomo C.A."/>
        </authorList>
    </citation>
    <scope>NUCLEOTIDE SEQUENCE [LARGE SCALE GENOMIC DNA]</scope>
    <source>
        <strain>ATCC MYA-826 / Pb01</strain>
    </source>
</reference>
<name>AMPP3_PARBA</name>
<feature type="chain" id="PRO_0000411879" description="Probable Xaa-Pro aminopeptidase PEPP">
    <location>
        <begin position="1"/>
        <end position="468"/>
    </location>
</feature>
<feature type="binding site" evidence="1">
    <location>
        <position position="264"/>
    </location>
    <ligand>
        <name>Mn(2+)</name>
        <dbReference type="ChEBI" id="CHEBI:29035"/>
        <label>2</label>
    </ligand>
</feature>
<feature type="binding site" evidence="1">
    <location>
        <position position="275"/>
    </location>
    <ligand>
        <name>Mn(2+)</name>
        <dbReference type="ChEBI" id="CHEBI:29035"/>
        <label>1</label>
    </ligand>
</feature>
<feature type="binding site" evidence="1">
    <location>
        <position position="275"/>
    </location>
    <ligand>
        <name>Mn(2+)</name>
        <dbReference type="ChEBI" id="CHEBI:29035"/>
        <label>2</label>
    </ligand>
</feature>
<feature type="binding site" evidence="1">
    <location>
        <position position="398"/>
    </location>
    <ligand>
        <name>Mn(2+)</name>
        <dbReference type="ChEBI" id="CHEBI:29035"/>
        <label>1</label>
    </ligand>
</feature>
<feature type="binding site" evidence="1">
    <location>
        <position position="438"/>
    </location>
    <ligand>
        <name>Mn(2+)</name>
        <dbReference type="ChEBI" id="CHEBI:29035"/>
        <label>1</label>
    </ligand>
</feature>
<feature type="binding site" evidence="1">
    <location>
        <position position="438"/>
    </location>
    <ligand>
        <name>Mn(2+)</name>
        <dbReference type="ChEBI" id="CHEBI:29035"/>
        <label>2</label>
    </ligand>
</feature>
<evidence type="ECO:0000250" key="1"/>
<evidence type="ECO:0000305" key="2"/>
<comment type="function">
    <text evidence="1">Catalyzes the removal of a penultimate prolyl residue from the N-termini of peptides.</text>
</comment>
<comment type="catalytic activity">
    <reaction>
        <text>Release of any N-terminal amino acid, including proline, that is linked to proline, even from a dipeptide or tripeptide.</text>
        <dbReference type="EC" id="3.4.11.9"/>
    </reaction>
</comment>
<comment type="cofactor">
    <cofactor evidence="1">
        <name>Mn(2+)</name>
        <dbReference type="ChEBI" id="CHEBI:29035"/>
    </cofactor>
    <text evidence="1">Binds 2 manganese ions per subunit.</text>
</comment>
<comment type="similarity">
    <text evidence="2">Belongs to the peptidase M24B family.</text>
</comment>
<proteinExistence type="inferred from homology"/>
<accession>C1H9Q9</accession>
<organism>
    <name type="scientific">Paracoccidioides lutzii (strain ATCC MYA-826 / Pb01)</name>
    <name type="common">Paracoccidioides brasiliensis</name>
    <dbReference type="NCBI Taxonomy" id="502779"/>
    <lineage>
        <taxon>Eukaryota</taxon>
        <taxon>Fungi</taxon>
        <taxon>Dikarya</taxon>
        <taxon>Ascomycota</taxon>
        <taxon>Pezizomycotina</taxon>
        <taxon>Eurotiomycetes</taxon>
        <taxon>Eurotiomycetidae</taxon>
        <taxon>Onygenales</taxon>
        <taxon>Ajellomycetaceae</taxon>
        <taxon>Paracoccidioides</taxon>
    </lineage>
</organism>
<keyword id="KW-0031">Aminopeptidase</keyword>
<keyword id="KW-0378">Hydrolase</keyword>
<keyword id="KW-0464">Manganese</keyword>
<keyword id="KW-0479">Metal-binding</keyword>
<keyword id="KW-0482">Metalloprotease</keyword>
<keyword id="KW-0645">Protease</keyword>
<keyword id="KW-1185">Reference proteome</keyword>
<sequence>MAVSVDQTLAGKYPAKLHAKRVAARIQELGHGDSGIIYLEGQKTHMIEDSDGEMPFRQRRNFFYLSGCPLPDSYLTYDIKADKLTIFIPPIDPASVIWSGLPLSVEEALEIYDVDAVLSTAEVNASLAHYCSAQGGKKVFAIADQVSPHITFLPFQEIDFDVLKRAAEESRVVKDSYEIALLRRANEISSKAHVAVFKAAMSARNERELEAIFVGACMSSGCREQSYHPIFASGTNAATLHYQKNDEDLVDSVTGQRRLNMLIDAGAEYRNYCADITRVVPLSGKFSPESRQIYDIVLEMQNSSLAMIKAGVMWEDVHSTSHRVAIRGLLKLGILRGTEEELFEKGISVAFFPHGLGHYLGMDTHDTGGNPNYADKDPKFKYLRLRGPLASGGVVTVEPGIYFCRFIIDPYLSSPDLGKYINADVLGRYWSVGGVRIEDNVVVTDNGYDNLTTAPKLPEEIEKLATEK</sequence>
<dbReference type="EC" id="3.4.11.9"/>
<dbReference type="EMBL" id="KN294015">
    <property type="protein sequence ID" value="EEH37082.1"/>
    <property type="molecule type" value="Genomic_DNA"/>
</dbReference>
<dbReference type="RefSeq" id="XP_002790641.1">
    <property type="nucleotide sequence ID" value="XM_002790595.2"/>
</dbReference>
<dbReference type="SMR" id="C1H9Q9"/>
<dbReference type="STRING" id="502779.C1H9Q9"/>
<dbReference type="GeneID" id="9093819"/>
<dbReference type="KEGG" id="pbl:PAAG_07500"/>
<dbReference type="VEuPathDB" id="FungiDB:PAAG_07500"/>
<dbReference type="eggNOG" id="KOG2737">
    <property type="taxonomic scope" value="Eukaryota"/>
</dbReference>
<dbReference type="HOGENOM" id="CLU_017266_1_2_1"/>
<dbReference type="OMA" id="DAHALFF"/>
<dbReference type="OrthoDB" id="10261878at2759"/>
<dbReference type="Proteomes" id="UP000002059">
    <property type="component" value="Partially assembled WGS sequence"/>
</dbReference>
<dbReference type="GO" id="GO:0030145">
    <property type="term" value="F:manganese ion binding"/>
    <property type="evidence" value="ECO:0007669"/>
    <property type="project" value="InterPro"/>
</dbReference>
<dbReference type="GO" id="GO:0070006">
    <property type="term" value="F:metalloaminopeptidase activity"/>
    <property type="evidence" value="ECO:0007669"/>
    <property type="project" value="InterPro"/>
</dbReference>
<dbReference type="GO" id="GO:0006508">
    <property type="term" value="P:proteolysis"/>
    <property type="evidence" value="ECO:0007669"/>
    <property type="project" value="UniProtKB-KW"/>
</dbReference>
<dbReference type="CDD" id="cd01087">
    <property type="entry name" value="Prolidase"/>
    <property type="match status" value="1"/>
</dbReference>
<dbReference type="FunFam" id="3.90.230.10:FF:000002">
    <property type="entry name" value="Xaa-Pro aminopeptidase 3"/>
    <property type="match status" value="1"/>
</dbReference>
<dbReference type="Gene3D" id="3.90.230.10">
    <property type="entry name" value="Creatinase/methionine aminopeptidase superfamily"/>
    <property type="match status" value="1"/>
</dbReference>
<dbReference type="Gene3D" id="3.40.350.10">
    <property type="entry name" value="Creatinase/prolidase N-terminal domain"/>
    <property type="match status" value="1"/>
</dbReference>
<dbReference type="InterPro" id="IPR007865">
    <property type="entry name" value="Aminopep_P_N"/>
</dbReference>
<dbReference type="InterPro" id="IPR029149">
    <property type="entry name" value="Creatin/AminoP/Spt16_N"/>
</dbReference>
<dbReference type="InterPro" id="IPR036005">
    <property type="entry name" value="Creatinase/aminopeptidase-like"/>
</dbReference>
<dbReference type="InterPro" id="IPR000994">
    <property type="entry name" value="Pept_M24"/>
</dbReference>
<dbReference type="InterPro" id="IPR052433">
    <property type="entry name" value="X-Pro_dipept-like"/>
</dbReference>
<dbReference type="PANTHER" id="PTHR43226">
    <property type="entry name" value="XAA-PRO AMINOPEPTIDASE 3"/>
    <property type="match status" value="1"/>
</dbReference>
<dbReference type="PANTHER" id="PTHR43226:SF1">
    <property type="entry name" value="XAA-PRO DIPEPTIDASE"/>
    <property type="match status" value="1"/>
</dbReference>
<dbReference type="Pfam" id="PF05195">
    <property type="entry name" value="AMP_N"/>
    <property type="match status" value="1"/>
</dbReference>
<dbReference type="Pfam" id="PF00557">
    <property type="entry name" value="Peptidase_M24"/>
    <property type="match status" value="1"/>
</dbReference>
<dbReference type="SMART" id="SM01011">
    <property type="entry name" value="AMP_N"/>
    <property type="match status" value="1"/>
</dbReference>
<dbReference type="SUPFAM" id="SSF55920">
    <property type="entry name" value="Creatinase/aminopeptidase"/>
    <property type="match status" value="1"/>
</dbReference>
<dbReference type="SUPFAM" id="SSF53092">
    <property type="entry name" value="Creatinase/prolidase N-terminal domain"/>
    <property type="match status" value="1"/>
</dbReference>
<gene>
    <name type="primary">PEPP</name>
    <name type="ORF">PAAG_07500</name>
</gene>